<protein>
    <recommendedName>
        <fullName evidence="1">Adapter protein MecA</fullName>
    </recommendedName>
</protein>
<dbReference type="EMBL" id="CP000919">
    <property type="protein sequence ID" value="ACO18869.1"/>
    <property type="molecule type" value="Genomic_DNA"/>
</dbReference>
<dbReference type="RefSeq" id="WP_000782676.1">
    <property type="nucleotide sequence ID" value="NC_012466.1"/>
</dbReference>
<dbReference type="SMR" id="C1CEV1"/>
<dbReference type="GeneID" id="45653378"/>
<dbReference type="KEGG" id="sjj:SPJ_1262"/>
<dbReference type="HOGENOM" id="CLU_071496_1_0_9"/>
<dbReference type="Proteomes" id="UP000002206">
    <property type="component" value="Chromosome"/>
</dbReference>
<dbReference type="GO" id="GO:0030674">
    <property type="term" value="F:protein-macromolecule adaptor activity"/>
    <property type="evidence" value="ECO:0007669"/>
    <property type="project" value="UniProtKB-UniRule"/>
</dbReference>
<dbReference type="Gene3D" id="3.30.70.1950">
    <property type="match status" value="1"/>
</dbReference>
<dbReference type="HAMAP" id="MF_01124">
    <property type="entry name" value="MecA"/>
    <property type="match status" value="1"/>
</dbReference>
<dbReference type="InterPro" id="IPR038471">
    <property type="entry name" value="MecA_C_sf"/>
</dbReference>
<dbReference type="InterPro" id="IPR008681">
    <property type="entry name" value="Neg-reg_MecA"/>
</dbReference>
<dbReference type="NCBIfam" id="NF002643">
    <property type="entry name" value="PRK02315.1-4"/>
    <property type="match status" value="1"/>
</dbReference>
<dbReference type="PANTHER" id="PTHR39161">
    <property type="entry name" value="ADAPTER PROTEIN MECA"/>
    <property type="match status" value="1"/>
</dbReference>
<dbReference type="PANTHER" id="PTHR39161:SF1">
    <property type="entry name" value="ADAPTER PROTEIN MECA 1"/>
    <property type="match status" value="1"/>
</dbReference>
<dbReference type="Pfam" id="PF05389">
    <property type="entry name" value="MecA"/>
    <property type="match status" value="1"/>
</dbReference>
<dbReference type="PIRSF" id="PIRSF029008">
    <property type="entry name" value="MecA"/>
    <property type="match status" value="1"/>
</dbReference>
<accession>C1CEV1</accession>
<organism>
    <name type="scientific">Streptococcus pneumoniae (strain JJA)</name>
    <dbReference type="NCBI Taxonomy" id="488222"/>
    <lineage>
        <taxon>Bacteria</taxon>
        <taxon>Bacillati</taxon>
        <taxon>Bacillota</taxon>
        <taxon>Bacilli</taxon>
        <taxon>Lactobacillales</taxon>
        <taxon>Streptococcaceae</taxon>
        <taxon>Streptococcus</taxon>
    </lineage>
</organism>
<evidence type="ECO:0000255" key="1">
    <source>
        <dbReference type="HAMAP-Rule" id="MF_01124"/>
    </source>
</evidence>
<gene>
    <name evidence="1" type="primary">mecA</name>
    <name type="ordered locus">SPJ_1262</name>
</gene>
<feature type="chain" id="PRO_1000164058" description="Adapter protein MecA">
    <location>
        <begin position="1"/>
        <end position="245"/>
    </location>
</feature>
<reference key="1">
    <citation type="journal article" date="2010" name="Genome Biol.">
        <title>Structure and dynamics of the pan-genome of Streptococcus pneumoniae and closely related species.</title>
        <authorList>
            <person name="Donati C."/>
            <person name="Hiller N.L."/>
            <person name="Tettelin H."/>
            <person name="Muzzi A."/>
            <person name="Croucher N.J."/>
            <person name="Angiuoli S.V."/>
            <person name="Oggioni M."/>
            <person name="Dunning Hotopp J.C."/>
            <person name="Hu F.Z."/>
            <person name="Riley D.R."/>
            <person name="Covacci A."/>
            <person name="Mitchell T.J."/>
            <person name="Bentley S.D."/>
            <person name="Kilian M."/>
            <person name="Ehrlich G.D."/>
            <person name="Rappuoli R."/>
            <person name="Moxon E.R."/>
            <person name="Masignani V."/>
        </authorList>
    </citation>
    <scope>NUCLEOTIDE SEQUENCE [LARGE SCALE GENOMIC DNA]</scope>
    <source>
        <strain>JJA</strain>
    </source>
</reference>
<comment type="function">
    <text evidence="1">Enables the recognition and targeting of unfolded and aggregated proteins to the ClpC protease or to other proteins involved in proteolysis.</text>
</comment>
<comment type="subunit">
    <text evidence="1">Homodimer.</text>
</comment>
<comment type="domain">
    <text>The N-terminal domain probably binds unfolded/aggregated proteins; the C-terminal domain interacts with ClpC.</text>
</comment>
<comment type="similarity">
    <text evidence="1">Belongs to the MecA family.</text>
</comment>
<sequence>MKMKQISDTTLKITMSLEDLMDRGMEIADFLVPQEKTEEFFYAILDELEMPDSFLDTGMLSFRVTPKPDKVDVFVTKSKIDQNLDFEDLSDLPDMEELAQMSPDEFIKTLEKSIADKTKDDIEAIQSLEQVEAKEEEQEQAEQEAESKKEPYIYYILSFAKLADLVAFAKTVTFEMETSELYKMNERYYLTILVDIENHPSPYPAWLLARMREFADDSDISRSVLQEYGQVLMSHDAVLNLQKIG</sequence>
<name>MECA_STRZJ</name>
<proteinExistence type="inferred from homology"/>